<keyword id="KW-0106">Calcium</keyword>
<keyword id="KW-0274">FAD</keyword>
<keyword id="KW-0285">Flavoprotein</keyword>
<keyword id="KW-0479">Metal-binding</keyword>
<keyword id="KW-0496">Mitochondrion</keyword>
<keyword id="KW-0560">Oxidoreductase</keyword>
<keyword id="KW-0597">Phosphoprotein</keyword>
<keyword id="KW-1185">Reference proteome</keyword>
<keyword id="KW-0677">Repeat</keyword>
<keyword id="KW-0809">Transit peptide</keyword>
<gene>
    <name type="primary">GPD2</name>
</gene>
<protein>
    <recommendedName>
        <fullName>Glycerol-3-phosphate dehydrogenase, mitochondrial</fullName>
        <shortName>GPD-M</shortName>
        <shortName>GPDH-M</shortName>
        <ecNumber evidence="2">1.1.5.3</ecNumber>
    </recommendedName>
    <alternativeName>
        <fullName>mGPD</fullName>
    </alternativeName>
</protein>
<comment type="function">
    <text evidence="2">Calcium-responsive mitochondrial glycerol-3-phosphate dehydrogenase which seems to be a key component of the pancreatic beta-cell glucose-sensing device.</text>
</comment>
<comment type="catalytic activity">
    <reaction evidence="2">
        <text>a quinone + sn-glycerol 3-phosphate = dihydroxyacetone phosphate + a quinol</text>
        <dbReference type="Rhea" id="RHEA:18977"/>
        <dbReference type="ChEBI" id="CHEBI:24646"/>
        <dbReference type="ChEBI" id="CHEBI:57597"/>
        <dbReference type="ChEBI" id="CHEBI:57642"/>
        <dbReference type="ChEBI" id="CHEBI:132124"/>
        <dbReference type="EC" id="1.1.5.3"/>
    </reaction>
    <physiologicalReaction direction="left-to-right" evidence="2">
        <dbReference type="Rhea" id="RHEA:18978"/>
    </physiologicalReaction>
</comment>
<comment type="cofactor">
    <cofactor evidence="1">
        <name>FAD</name>
        <dbReference type="ChEBI" id="CHEBI:57692"/>
    </cofactor>
</comment>
<comment type="activity regulation">
    <text evidence="2">Calcium-binding enhance the activity of the enzyme.</text>
</comment>
<comment type="pathway">
    <text>Polyol metabolism; glycerol degradation via glycerol kinase pathway; glycerone phosphate from sn-glycerol 3-phosphate (aerobic route): step 1/1.</text>
</comment>
<comment type="subcellular location">
    <subcellularLocation>
        <location evidence="1">Mitochondrion</location>
    </subcellularLocation>
</comment>
<comment type="similarity">
    <text evidence="6">Belongs to the FAD-dependent glycerol-3-phosphate dehydrogenase family.</text>
</comment>
<reference key="1">
    <citation type="submission" date="2007-07" db="EMBL/GenBank/DDBJ databases">
        <title>Hamster sperm capacitation: role of FAD linked glycerol-3-phosphate dehydrogenase.</title>
        <authorList>
            <person name="Venkatesh K."/>
            <person name="Shivaji S."/>
        </authorList>
    </citation>
    <scope>NUCLEOTIDE SEQUENCE [MRNA]</scope>
</reference>
<reference key="2">
    <citation type="journal article" date="2010" name="Asian J. Androl.">
        <title>Glucose-regulated protein precursor (GRP78) and tumor rejection antigen (GP96) are unique to hamster caput epididymal spermatozoa.</title>
        <authorList>
            <person name="Kameshwari D.B."/>
            <person name="Bhande S."/>
            <person name="Sundaram C.S."/>
            <person name="Kota V."/>
            <person name="Siva A.B."/>
            <person name="Shivaji S."/>
        </authorList>
    </citation>
    <scope>IDENTIFICATION BY MASS SPECTROMETRY</scope>
</reference>
<organism>
    <name type="scientific">Mesocricetus auratus</name>
    <name type="common">Golden hamster</name>
    <dbReference type="NCBI Taxonomy" id="10036"/>
    <lineage>
        <taxon>Eukaryota</taxon>
        <taxon>Metazoa</taxon>
        <taxon>Chordata</taxon>
        <taxon>Craniata</taxon>
        <taxon>Vertebrata</taxon>
        <taxon>Euteleostomi</taxon>
        <taxon>Mammalia</taxon>
        <taxon>Eutheria</taxon>
        <taxon>Euarchontoglires</taxon>
        <taxon>Glires</taxon>
        <taxon>Rodentia</taxon>
        <taxon>Myomorpha</taxon>
        <taxon>Muroidea</taxon>
        <taxon>Cricetidae</taxon>
        <taxon>Cricetinae</taxon>
        <taxon>Mesocricetus</taxon>
    </lineage>
</organism>
<name>GPDM_MESAU</name>
<dbReference type="EC" id="1.1.5.3" evidence="2"/>
<dbReference type="EMBL" id="AM774032">
    <property type="protein sequence ID" value="CAO79918.1"/>
    <property type="molecule type" value="mRNA"/>
</dbReference>
<dbReference type="RefSeq" id="NP_001268609.1">
    <property type="nucleotide sequence ID" value="NM_001281680.1"/>
</dbReference>
<dbReference type="SMR" id="A7DZP8"/>
<dbReference type="STRING" id="10036.ENSMAUP00000015742"/>
<dbReference type="GeneID" id="101825992"/>
<dbReference type="KEGG" id="maua:101825992"/>
<dbReference type="CTD" id="2820"/>
<dbReference type="eggNOG" id="KOG0042">
    <property type="taxonomic scope" value="Eukaryota"/>
</dbReference>
<dbReference type="OrthoDB" id="264015at2759"/>
<dbReference type="UniPathway" id="UPA00618">
    <property type="reaction ID" value="UER00674"/>
</dbReference>
<dbReference type="Proteomes" id="UP000189706">
    <property type="component" value="Unplaced"/>
</dbReference>
<dbReference type="GO" id="GO:0005739">
    <property type="term" value="C:mitochondrion"/>
    <property type="evidence" value="ECO:0007669"/>
    <property type="project" value="UniProtKB-SubCell"/>
</dbReference>
<dbReference type="GO" id="GO:0005509">
    <property type="term" value="F:calcium ion binding"/>
    <property type="evidence" value="ECO:0007669"/>
    <property type="project" value="InterPro"/>
</dbReference>
<dbReference type="GO" id="GO:0004368">
    <property type="term" value="F:glycerol-3-phosphate dehydrogenase (quinone) activity"/>
    <property type="evidence" value="ECO:0000250"/>
    <property type="project" value="UniProtKB"/>
</dbReference>
<dbReference type="GO" id="GO:0019563">
    <property type="term" value="P:glycerol catabolic process"/>
    <property type="evidence" value="ECO:0007669"/>
    <property type="project" value="UniProtKB-UniPathway"/>
</dbReference>
<dbReference type="GO" id="GO:0006072">
    <property type="term" value="P:glycerol-3-phosphate metabolic process"/>
    <property type="evidence" value="ECO:0007669"/>
    <property type="project" value="InterPro"/>
</dbReference>
<dbReference type="GO" id="GO:0006734">
    <property type="term" value="P:NADH metabolic process"/>
    <property type="evidence" value="ECO:0007669"/>
    <property type="project" value="UniProtKB-ARBA"/>
</dbReference>
<dbReference type="CDD" id="cd00051">
    <property type="entry name" value="EFh"/>
    <property type="match status" value="1"/>
</dbReference>
<dbReference type="FunFam" id="1.10.238.10:FF:000155">
    <property type="entry name" value="Glycerol-3-phosphate dehydrogenase"/>
    <property type="match status" value="1"/>
</dbReference>
<dbReference type="FunFam" id="1.10.8.870:FF:000001">
    <property type="entry name" value="Glycerol-3-phosphate dehydrogenase"/>
    <property type="match status" value="1"/>
</dbReference>
<dbReference type="FunFam" id="3.30.9.10:FF:000001">
    <property type="entry name" value="Glycerol-3-phosphate dehydrogenase"/>
    <property type="match status" value="1"/>
</dbReference>
<dbReference type="Gene3D" id="1.10.8.870">
    <property type="entry name" value="Alpha-glycerophosphate oxidase, cap domain"/>
    <property type="match status" value="1"/>
</dbReference>
<dbReference type="Gene3D" id="3.30.9.10">
    <property type="entry name" value="D-Amino Acid Oxidase, subunit A, domain 2"/>
    <property type="match status" value="1"/>
</dbReference>
<dbReference type="Gene3D" id="1.10.238.10">
    <property type="entry name" value="EF-hand"/>
    <property type="match status" value="1"/>
</dbReference>
<dbReference type="Gene3D" id="3.50.50.60">
    <property type="entry name" value="FAD/NAD(P)-binding domain"/>
    <property type="match status" value="1"/>
</dbReference>
<dbReference type="InterPro" id="IPR031656">
    <property type="entry name" value="DAO_C"/>
</dbReference>
<dbReference type="InterPro" id="IPR038299">
    <property type="entry name" value="DAO_C_sf"/>
</dbReference>
<dbReference type="InterPro" id="IPR011992">
    <property type="entry name" value="EF-hand-dom_pair"/>
</dbReference>
<dbReference type="InterPro" id="IPR018247">
    <property type="entry name" value="EF_Hand_1_Ca_BS"/>
</dbReference>
<dbReference type="InterPro" id="IPR002048">
    <property type="entry name" value="EF_hand_dom"/>
</dbReference>
<dbReference type="InterPro" id="IPR006076">
    <property type="entry name" value="FAD-dep_OxRdtase"/>
</dbReference>
<dbReference type="InterPro" id="IPR036188">
    <property type="entry name" value="FAD/NAD-bd_sf"/>
</dbReference>
<dbReference type="InterPro" id="IPR000447">
    <property type="entry name" value="G3P_DH_FAD-dep"/>
</dbReference>
<dbReference type="PANTHER" id="PTHR11985">
    <property type="entry name" value="GLYCEROL-3-PHOSPHATE DEHYDROGENASE"/>
    <property type="match status" value="1"/>
</dbReference>
<dbReference type="PANTHER" id="PTHR11985:SF15">
    <property type="entry name" value="GLYCEROL-3-PHOSPHATE DEHYDROGENASE, MITOCHONDRIAL"/>
    <property type="match status" value="1"/>
</dbReference>
<dbReference type="Pfam" id="PF01266">
    <property type="entry name" value="DAO"/>
    <property type="match status" value="1"/>
</dbReference>
<dbReference type="Pfam" id="PF16901">
    <property type="entry name" value="DAO_C"/>
    <property type="match status" value="1"/>
</dbReference>
<dbReference type="Pfam" id="PF13499">
    <property type="entry name" value="EF-hand_7"/>
    <property type="match status" value="1"/>
</dbReference>
<dbReference type="PRINTS" id="PR01001">
    <property type="entry name" value="FADG3PDH"/>
</dbReference>
<dbReference type="SMART" id="SM00054">
    <property type="entry name" value="EFh"/>
    <property type="match status" value="2"/>
</dbReference>
<dbReference type="SUPFAM" id="SSF47473">
    <property type="entry name" value="EF-hand"/>
    <property type="match status" value="1"/>
</dbReference>
<dbReference type="SUPFAM" id="SSF54373">
    <property type="entry name" value="FAD-linked reductases, C-terminal domain"/>
    <property type="match status" value="1"/>
</dbReference>
<dbReference type="SUPFAM" id="SSF51905">
    <property type="entry name" value="FAD/NAD(P)-binding domain"/>
    <property type="match status" value="1"/>
</dbReference>
<dbReference type="PROSITE" id="PS00018">
    <property type="entry name" value="EF_HAND_1"/>
    <property type="match status" value="1"/>
</dbReference>
<dbReference type="PROSITE" id="PS50222">
    <property type="entry name" value="EF_HAND_2"/>
    <property type="match status" value="2"/>
</dbReference>
<dbReference type="PROSITE" id="PS00977">
    <property type="entry name" value="FAD_G3PDH_1"/>
    <property type="match status" value="1"/>
</dbReference>
<dbReference type="PROSITE" id="PS00978">
    <property type="entry name" value="FAD_G3PDH_2"/>
    <property type="match status" value="1"/>
</dbReference>
<evidence type="ECO:0000250" key="1"/>
<evidence type="ECO:0000250" key="2">
    <source>
        <dbReference type="UniProtKB" id="P43304"/>
    </source>
</evidence>
<evidence type="ECO:0000250" key="3">
    <source>
        <dbReference type="UniProtKB" id="Q64521"/>
    </source>
</evidence>
<evidence type="ECO:0000255" key="4"/>
<evidence type="ECO:0000255" key="5">
    <source>
        <dbReference type="PROSITE-ProRule" id="PRU00448"/>
    </source>
</evidence>
<evidence type="ECO:0000305" key="6"/>
<proteinExistence type="evidence at protein level"/>
<accession>A7DZP8</accession>
<feature type="transit peptide" description="Mitochondrion" evidence="1">
    <location>
        <begin position="1"/>
        <end position="42"/>
    </location>
</feature>
<feature type="chain" id="PRO_0000355968" description="Glycerol-3-phosphate dehydrogenase, mitochondrial">
    <location>
        <begin position="43"/>
        <end position="727"/>
    </location>
</feature>
<feature type="domain" description="EF-hand 1" evidence="5">
    <location>
        <begin position="623"/>
        <end position="658"/>
    </location>
</feature>
<feature type="domain" description="EF-hand 2" evidence="5">
    <location>
        <begin position="659"/>
        <end position="694"/>
    </location>
</feature>
<feature type="binding site" evidence="4">
    <location>
        <begin position="71"/>
        <end position="99"/>
    </location>
    <ligand>
        <name>FAD</name>
        <dbReference type="ChEBI" id="CHEBI:57692"/>
    </ligand>
</feature>
<feature type="binding site" evidence="5">
    <location>
        <position position="672"/>
    </location>
    <ligand>
        <name>Ca(2+)</name>
        <dbReference type="ChEBI" id="CHEBI:29108"/>
    </ligand>
</feature>
<feature type="binding site" evidence="5">
    <location>
        <position position="674"/>
    </location>
    <ligand>
        <name>Ca(2+)</name>
        <dbReference type="ChEBI" id="CHEBI:29108"/>
    </ligand>
</feature>
<feature type="binding site" evidence="5">
    <location>
        <position position="676"/>
    </location>
    <ligand>
        <name>Ca(2+)</name>
        <dbReference type="ChEBI" id="CHEBI:29108"/>
    </ligand>
</feature>
<feature type="binding site" evidence="5">
    <location>
        <position position="678"/>
    </location>
    <ligand>
        <name>Ca(2+)</name>
        <dbReference type="ChEBI" id="CHEBI:29108"/>
    </ligand>
</feature>
<feature type="binding site" evidence="5">
    <location>
        <position position="683"/>
    </location>
    <ligand>
        <name>Ca(2+)</name>
        <dbReference type="ChEBI" id="CHEBI:29108"/>
    </ligand>
</feature>
<feature type="modified residue" description="Phosphotyrosine" evidence="3">
    <location>
        <position position="601"/>
    </location>
</feature>
<sequence>MAFQKAVKRTVLVCGGALATVLGLSQCSHYRRKQVNLACLKAAGCHTEPVNREPPSREAQLLTLQNTSEFDILVIGGGATGSGCALDAVTRGLKTALVERDDFSSGTSSRSTKLIHGGVRYLQKAIMKLDVEQYRMVKEALHERANLLEIAPHLSAPLPIMLPIYKWWQLPYYWVGIKLYDLVAGSNCLKSSYVLSKSRALEHFPMLQKDKLVGAIVYYDGQHNDARMNLAIALTAARYGAATANYREVVSLLKKTDPETGKERVSGARCKDVLTGLEFDVRAKCVINATGPFTDSVRKMDDNKAPAICQPSAGVHIVMPGYYSPESMGLLDPATSDGRVIFFLPWENMTIAGTTDSPTKNTHHPIPSEEDINFILNEVRNYLSCDVEVRRGDVLAAWSGIRPLVIDPKSADTQSISRNHVVDVSESGLITIAGGKWTTYRSMAEDTVDTAIKVHNLKAGPCRTVGLFLQGGKDWSPTLYIRLVQDYGLESEVAQHLATTYGDKAFEVAKMAKVTGKRWPIVGVRLVSEFPYIEAEVKYGIKEYACTAVDMISRRTRLAFLNIQAAEEALPRIVELMGRELDWSEIRKQAELETATKFLYYEMGSKSRSEQLTDRTEISLRPSDIERYTKRFHKFDADEKGFITIVDVQRVLENINVKIDENTLHEILSEVDLNKNGQVELNEFLQLMSAIQKGRVSGSRLAILMKTAEENLDRRVPIPVDRSCGGL</sequence>